<sequence>MKSGQAEIVETSKGIQKSGLMSRRIAILEFILRIVAFFNTIGSAILMGTTHETLPFFTQFIRFQAEYNDLPALTFFVVANAVVSGYLIMSLTLAFVHIVKRKTQNTRILLIVLDVAMLGLLSAGASSAAAIVYLAHNGNNKTNWFAICQQFNSFCERISGSLIGSFIAVVLLILLILLSAIALSRRH</sequence>
<dbReference type="EMBL" id="GL348718">
    <property type="protein sequence ID" value="EFH47918.1"/>
    <property type="status" value="ALT_SEQ"/>
    <property type="molecule type" value="Genomic_DNA"/>
</dbReference>
<dbReference type="RefSeq" id="XP_002871659.1">
    <property type="nucleotide sequence ID" value="XM_002871613.1"/>
</dbReference>
<dbReference type="SMR" id="D7M7B3"/>
<dbReference type="STRING" id="81972.D7M7B3"/>
<dbReference type="eggNOG" id="ENOG502RXTK">
    <property type="taxonomic scope" value="Eukaryota"/>
</dbReference>
<dbReference type="HOGENOM" id="CLU_066104_3_2_1"/>
<dbReference type="OrthoDB" id="753675at2759"/>
<dbReference type="Proteomes" id="UP000008694">
    <property type="component" value="Unassembled WGS sequence"/>
</dbReference>
<dbReference type="GO" id="GO:0005886">
    <property type="term" value="C:plasma membrane"/>
    <property type="evidence" value="ECO:0007669"/>
    <property type="project" value="UniProtKB-SubCell"/>
</dbReference>
<dbReference type="GO" id="GO:0071555">
    <property type="term" value="P:cell wall organization"/>
    <property type="evidence" value="ECO:0007669"/>
    <property type="project" value="UniProtKB-KW"/>
</dbReference>
<dbReference type="InterPro" id="IPR006459">
    <property type="entry name" value="CASP/CASPL"/>
</dbReference>
<dbReference type="InterPro" id="IPR006702">
    <property type="entry name" value="CASP_dom"/>
</dbReference>
<dbReference type="InterPro" id="IPR044173">
    <property type="entry name" value="CASPL"/>
</dbReference>
<dbReference type="NCBIfam" id="TIGR01569">
    <property type="entry name" value="A_tha_TIGR01569"/>
    <property type="match status" value="1"/>
</dbReference>
<dbReference type="PANTHER" id="PTHR36488:SF12">
    <property type="entry name" value="CASP-LIKE PROTEIN"/>
    <property type="match status" value="1"/>
</dbReference>
<dbReference type="PANTHER" id="PTHR36488">
    <property type="entry name" value="CASP-LIKE PROTEIN 1U1"/>
    <property type="match status" value="1"/>
</dbReference>
<dbReference type="Pfam" id="PF04535">
    <property type="entry name" value="CASP_dom"/>
    <property type="match status" value="1"/>
</dbReference>
<organism>
    <name type="scientific">Arabidopsis lyrata subsp. lyrata</name>
    <name type="common">Lyre-leaved rock-cress</name>
    <dbReference type="NCBI Taxonomy" id="81972"/>
    <lineage>
        <taxon>Eukaryota</taxon>
        <taxon>Viridiplantae</taxon>
        <taxon>Streptophyta</taxon>
        <taxon>Embryophyta</taxon>
        <taxon>Tracheophyta</taxon>
        <taxon>Spermatophyta</taxon>
        <taxon>Magnoliopsida</taxon>
        <taxon>eudicotyledons</taxon>
        <taxon>Gunneridae</taxon>
        <taxon>Pentapetalae</taxon>
        <taxon>rosids</taxon>
        <taxon>malvids</taxon>
        <taxon>Brassicales</taxon>
        <taxon>Brassicaceae</taxon>
        <taxon>Camelineae</taxon>
        <taxon>Arabidopsis</taxon>
    </lineage>
</organism>
<feature type="chain" id="PRO_0000411999" description="Casparian strip membrane protein 5">
    <location>
        <begin position="1"/>
        <end position="187"/>
    </location>
</feature>
<feature type="topological domain" description="Cytoplasmic" evidence="2">
    <location>
        <begin position="1"/>
        <end position="24"/>
    </location>
</feature>
<feature type="transmembrane region" description="Helical" evidence="2">
    <location>
        <begin position="25"/>
        <end position="45"/>
    </location>
</feature>
<feature type="topological domain" description="Extracellular" evidence="2">
    <location>
        <begin position="46"/>
        <end position="74"/>
    </location>
</feature>
<feature type="transmembrane region" description="Helical" evidence="2">
    <location>
        <begin position="75"/>
        <end position="95"/>
    </location>
</feature>
<feature type="topological domain" description="Cytoplasmic" evidence="2">
    <location>
        <begin position="96"/>
        <end position="107"/>
    </location>
</feature>
<feature type="transmembrane region" description="Helical" evidence="2">
    <location>
        <begin position="108"/>
        <end position="128"/>
    </location>
</feature>
<feature type="topological domain" description="Extracellular" evidence="2">
    <location>
        <begin position="129"/>
        <end position="161"/>
    </location>
</feature>
<feature type="transmembrane region" description="Helical" evidence="2">
    <location>
        <begin position="162"/>
        <end position="182"/>
    </location>
</feature>
<feature type="topological domain" description="Cytoplasmic" evidence="2">
    <location>
        <begin position="183"/>
        <end position="187"/>
    </location>
</feature>
<feature type="glycosylation site" description="N-linked (GlcNAc...) asparagine" evidence="2">
    <location>
        <position position="140"/>
    </location>
</feature>
<comment type="function">
    <text evidence="1">Regulates membrane-cell wall junctions and localized cell wall deposition. Required for establishment of the Casparian strip membrane domain (CSD) and the subsequent formation of Casparian strips, a cell wall modification of the root endodermis that determines an apoplastic barrier between the intraorganismal apoplasm and the extraorganismal apoplasm and prevents lateral diffusion (By similarity).</text>
</comment>
<comment type="subunit">
    <text evidence="1">Homodimer and heterodimers.</text>
</comment>
<comment type="subcellular location">
    <subcellularLocation>
        <location evidence="1">Cell membrane</location>
        <topology evidence="1">Multi-pass membrane protein</topology>
    </subcellularLocation>
    <text evidence="1">Very restricted localization following a belt shape within the plasma membrane which coincides with the position of the Casparian strip membrane domain in the root endodermis.</text>
</comment>
<comment type="similarity">
    <text evidence="3">Belongs to the Casparian strip membrane proteins (CASP) family.</text>
</comment>
<comment type="sequence caution" evidence="3">
    <conflict type="erroneous gene model prediction">
        <sequence resource="EMBL-CDS" id="EFH47918"/>
    </conflict>
</comment>
<accession>D7M7B3</accession>
<protein>
    <recommendedName>
        <fullName>Casparian strip membrane protein 5</fullName>
        <shortName>AlCASP5</shortName>
    </recommendedName>
</protein>
<proteinExistence type="inferred from homology"/>
<gene>
    <name type="ORF">ARALYDRAFT_488377</name>
</gene>
<reference key="1">
    <citation type="journal article" date="2011" name="Nat. Genet.">
        <title>The Arabidopsis lyrata genome sequence and the basis of rapid genome size change.</title>
        <authorList>
            <person name="Hu T.T."/>
            <person name="Pattyn P."/>
            <person name="Bakker E.G."/>
            <person name="Cao J."/>
            <person name="Cheng J.-F."/>
            <person name="Clark R.M."/>
            <person name="Fahlgren N."/>
            <person name="Fawcett J.A."/>
            <person name="Grimwood J."/>
            <person name="Gundlach H."/>
            <person name="Haberer G."/>
            <person name="Hollister J.D."/>
            <person name="Ossowski S."/>
            <person name="Ottilar R.P."/>
            <person name="Salamov A.A."/>
            <person name="Schneeberger K."/>
            <person name="Spannagl M."/>
            <person name="Wang X."/>
            <person name="Yang L."/>
            <person name="Nasrallah M.E."/>
            <person name="Bergelson J."/>
            <person name="Carrington J.C."/>
            <person name="Gaut B.S."/>
            <person name="Schmutz J."/>
            <person name="Mayer K.F.X."/>
            <person name="Van de Peer Y."/>
            <person name="Grigoriev I.V."/>
            <person name="Nordborg M."/>
            <person name="Weigel D."/>
            <person name="Guo Y.-L."/>
        </authorList>
    </citation>
    <scope>NUCLEOTIDE SEQUENCE [LARGE SCALE GENOMIC DNA]</scope>
    <source>
        <strain>cv. MN47</strain>
    </source>
</reference>
<reference key="2">
    <citation type="journal article" date="2014" name="Plant Physiol.">
        <title>Functional and evolutionary analysis of the CASPARIAN STRIP MEMBRANE DOMAIN PROTEIN family.</title>
        <authorList>
            <person name="Roppolo D."/>
            <person name="Boeckmann B."/>
            <person name="Pfister A."/>
            <person name="Boutet E."/>
            <person name="Rubio M.C."/>
            <person name="Denervaud-Tendon V."/>
            <person name="Vermeer J.E."/>
            <person name="Gheyselinck J."/>
            <person name="Xenarios I."/>
            <person name="Geldner N."/>
        </authorList>
    </citation>
    <scope>GENE FAMILY</scope>
    <scope>NOMENCLATURE</scope>
</reference>
<keyword id="KW-1003">Cell membrane</keyword>
<keyword id="KW-0961">Cell wall biogenesis/degradation</keyword>
<keyword id="KW-0325">Glycoprotein</keyword>
<keyword id="KW-0472">Membrane</keyword>
<keyword id="KW-1185">Reference proteome</keyword>
<keyword id="KW-0812">Transmembrane</keyword>
<keyword id="KW-1133">Transmembrane helix</keyword>
<evidence type="ECO:0000250" key="1"/>
<evidence type="ECO:0000255" key="2"/>
<evidence type="ECO:0000305" key="3"/>
<name>CASP5_ARALL</name>